<sequence length="615" mass="68889">MSAEKQTHGFQAEVSRLLHLMIHSLYSNREIFLRELISNASDACDKLRFEALDNPALLEQGGEPQITLRVDKDAGTLTIADNGIGMSENEVVDNLGTIARSGTEKFLANLSGDQKKDAQLIGQFGVGFYSAFIVAETVTVETRKAGEAVNNGVRWESDGKGEFTVETVPRDEQGTAVILHLRDDAKDFLDDFKIRQVIGQYSDHVAFPIVLETPQEGDKDTKTETLNSATALWQRPRSEVTDEEYQSFYKHISHDFQDALTWSHNKVEGKLEYTSLLYVPAQAPFDLYQREANRGLKLYVQRVFIMDDAEQFLPQYLRFIKGVIDAPDLPLNVSRELLQDYGPVQKIRSALTKRVLQMLKKLSNDDKQYAKFWAQFGSVIKEGVAEDRDNQQSIAALLRFATSKTPDSVSTSLDQYLESKPADQDCIYYLLADTPSAARQSPHLEVFRKKGIEVLLLSDPVDEWMVGYLESYKEVKLVNAARGELDLGDESEQANNDDPLIQRLAASLTEQVEAVRATTRLVDSPACLVLAEDQLGPQMRRMLEAAGQPVPENKPVLEVNLDHTLLQALTRIEEDEKFNDFAALLLDQAMLAEGQLPKDPAATARRMQALLSQSV</sequence>
<comment type="function">
    <text evidence="1">Molecular chaperone. Has ATPase activity.</text>
</comment>
<comment type="subunit">
    <text evidence="1">Homodimer.</text>
</comment>
<comment type="subcellular location">
    <subcellularLocation>
        <location evidence="1">Cytoplasm</location>
    </subcellularLocation>
</comment>
<comment type="similarity">
    <text evidence="1">Belongs to the heat shock protein 90 family.</text>
</comment>
<keyword id="KW-0067">ATP-binding</keyword>
<keyword id="KW-0143">Chaperone</keyword>
<keyword id="KW-0963">Cytoplasm</keyword>
<keyword id="KW-0547">Nucleotide-binding</keyword>
<keyword id="KW-1185">Reference proteome</keyword>
<keyword id="KW-0346">Stress response</keyword>
<gene>
    <name evidence="1" type="primary">htpG</name>
    <name type="ordered locus">ABO_1489</name>
</gene>
<dbReference type="EMBL" id="AM286690">
    <property type="protein sequence ID" value="CAL16937.1"/>
    <property type="molecule type" value="Genomic_DNA"/>
</dbReference>
<dbReference type="RefSeq" id="WP_011588770.1">
    <property type="nucleotide sequence ID" value="NC_008260.1"/>
</dbReference>
<dbReference type="SMR" id="Q0VPG1"/>
<dbReference type="STRING" id="393595.ABO_1489"/>
<dbReference type="KEGG" id="abo:ABO_1489"/>
<dbReference type="eggNOG" id="COG0326">
    <property type="taxonomic scope" value="Bacteria"/>
</dbReference>
<dbReference type="HOGENOM" id="CLU_006684_3_0_6"/>
<dbReference type="OrthoDB" id="9802640at2"/>
<dbReference type="Proteomes" id="UP000008871">
    <property type="component" value="Chromosome"/>
</dbReference>
<dbReference type="GO" id="GO:0005737">
    <property type="term" value="C:cytoplasm"/>
    <property type="evidence" value="ECO:0007669"/>
    <property type="project" value="UniProtKB-SubCell"/>
</dbReference>
<dbReference type="GO" id="GO:0005524">
    <property type="term" value="F:ATP binding"/>
    <property type="evidence" value="ECO:0007669"/>
    <property type="project" value="UniProtKB-UniRule"/>
</dbReference>
<dbReference type="GO" id="GO:0016887">
    <property type="term" value="F:ATP hydrolysis activity"/>
    <property type="evidence" value="ECO:0007669"/>
    <property type="project" value="InterPro"/>
</dbReference>
<dbReference type="GO" id="GO:0140662">
    <property type="term" value="F:ATP-dependent protein folding chaperone"/>
    <property type="evidence" value="ECO:0007669"/>
    <property type="project" value="InterPro"/>
</dbReference>
<dbReference type="GO" id="GO:0051082">
    <property type="term" value="F:unfolded protein binding"/>
    <property type="evidence" value="ECO:0007669"/>
    <property type="project" value="UniProtKB-UniRule"/>
</dbReference>
<dbReference type="CDD" id="cd16927">
    <property type="entry name" value="HATPase_Hsp90-like"/>
    <property type="match status" value="1"/>
</dbReference>
<dbReference type="FunFam" id="3.30.230.80:FF:000002">
    <property type="entry name" value="Molecular chaperone HtpG"/>
    <property type="match status" value="1"/>
</dbReference>
<dbReference type="FunFam" id="3.30.565.10:FF:000009">
    <property type="entry name" value="Molecular chaperone HtpG"/>
    <property type="match status" value="1"/>
</dbReference>
<dbReference type="Gene3D" id="3.30.230.80">
    <property type="match status" value="1"/>
</dbReference>
<dbReference type="Gene3D" id="3.40.50.11260">
    <property type="match status" value="1"/>
</dbReference>
<dbReference type="Gene3D" id="1.20.120.790">
    <property type="entry name" value="Heat shock protein 90, C-terminal domain"/>
    <property type="match status" value="1"/>
</dbReference>
<dbReference type="Gene3D" id="3.30.565.10">
    <property type="entry name" value="Histidine kinase-like ATPase, C-terminal domain"/>
    <property type="match status" value="1"/>
</dbReference>
<dbReference type="HAMAP" id="MF_00505">
    <property type="entry name" value="HSP90"/>
    <property type="match status" value="1"/>
</dbReference>
<dbReference type="InterPro" id="IPR036890">
    <property type="entry name" value="HATPase_C_sf"/>
</dbReference>
<dbReference type="InterPro" id="IPR019805">
    <property type="entry name" value="Heat_shock_protein_90_CS"/>
</dbReference>
<dbReference type="InterPro" id="IPR037196">
    <property type="entry name" value="HSP90_C"/>
</dbReference>
<dbReference type="InterPro" id="IPR001404">
    <property type="entry name" value="Hsp90_fam"/>
</dbReference>
<dbReference type="InterPro" id="IPR020575">
    <property type="entry name" value="Hsp90_N"/>
</dbReference>
<dbReference type="InterPro" id="IPR020568">
    <property type="entry name" value="Ribosomal_Su5_D2-typ_SF"/>
</dbReference>
<dbReference type="NCBIfam" id="NF003555">
    <property type="entry name" value="PRK05218.1"/>
    <property type="match status" value="1"/>
</dbReference>
<dbReference type="PANTHER" id="PTHR11528">
    <property type="entry name" value="HEAT SHOCK PROTEIN 90 FAMILY MEMBER"/>
    <property type="match status" value="1"/>
</dbReference>
<dbReference type="Pfam" id="PF13589">
    <property type="entry name" value="HATPase_c_3"/>
    <property type="match status" value="1"/>
</dbReference>
<dbReference type="Pfam" id="PF00183">
    <property type="entry name" value="HSP90"/>
    <property type="match status" value="1"/>
</dbReference>
<dbReference type="PIRSF" id="PIRSF002583">
    <property type="entry name" value="Hsp90"/>
    <property type="match status" value="1"/>
</dbReference>
<dbReference type="PRINTS" id="PR00775">
    <property type="entry name" value="HEATSHOCK90"/>
</dbReference>
<dbReference type="SMART" id="SM00387">
    <property type="entry name" value="HATPase_c"/>
    <property type="match status" value="1"/>
</dbReference>
<dbReference type="SUPFAM" id="SSF55874">
    <property type="entry name" value="ATPase domain of HSP90 chaperone/DNA topoisomerase II/histidine kinase"/>
    <property type="match status" value="1"/>
</dbReference>
<dbReference type="SUPFAM" id="SSF110942">
    <property type="entry name" value="HSP90 C-terminal domain"/>
    <property type="match status" value="1"/>
</dbReference>
<dbReference type="SUPFAM" id="SSF54211">
    <property type="entry name" value="Ribosomal protein S5 domain 2-like"/>
    <property type="match status" value="1"/>
</dbReference>
<dbReference type="PROSITE" id="PS00298">
    <property type="entry name" value="HSP90"/>
    <property type="match status" value="1"/>
</dbReference>
<feature type="chain" id="PRO_0000258502" description="Chaperone protein HtpG">
    <location>
        <begin position="1"/>
        <end position="615"/>
    </location>
</feature>
<feature type="region of interest" description="A; substrate-binding" evidence="1">
    <location>
        <begin position="1"/>
        <end position="335"/>
    </location>
</feature>
<feature type="region of interest" description="B" evidence="1">
    <location>
        <begin position="336"/>
        <end position="541"/>
    </location>
</feature>
<feature type="region of interest" description="C" evidence="1">
    <location>
        <begin position="542"/>
        <end position="615"/>
    </location>
</feature>
<proteinExistence type="inferred from homology"/>
<accession>Q0VPG1</accession>
<protein>
    <recommendedName>
        <fullName evidence="1">Chaperone protein HtpG</fullName>
    </recommendedName>
    <alternativeName>
        <fullName evidence="1">Heat shock protein HtpG</fullName>
    </alternativeName>
    <alternativeName>
        <fullName evidence="1">High temperature protein G</fullName>
    </alternativeName>
</protein>
<name>HTPG_ALCBS</name>
<organism>
    <name type="scientific">Alcanivorax borkumensis (strain ATCC 700651 / DSM 11573 / NCIMB 13689 / SK2)</name>
    <dbReference type="NCBI Taxonomy" id="393595"/>
    <lineage>
        <taxon>Bacteria</taxon>
        <taxon>Pseudomonadati</taxon>
        <taxon>Pseudomonadota</taxon>
        <taxon>Gammaproteobacteria</taxon>
        <taxon>Oceanospirillales</taxon>
        <taxon>Alcanivoracaceae</taxon>
        <taxon>Alcanivorax</taxon>
    </lineage>
</organism>
<reference key="1">
    <citation type="journal article" date="2006" name="Nat. Biotechnol.">
        <title>Genome sequence of the ubiquitous hydrocarbon-degrading marine bacterium Alcanivorax borkumensis.</title>
        <authorList>
            <person name="Schneiker S."/>
            <person name="Martins dos Santos V.A.P."/>
            <person name="Bartels D."/>
            <person name="Bekel T."/>
            <person name="Brecht M."/>
            <person name="Buhrmester J."/>
            <person name="Chernikova T.N."/>
            <person name="Denaro R."/>
            <person name="Ferrer M."/>
            <person name="Gertler C."/>
            <person name="Goesmann A."/>
            <person name="Golyshina O.V."/>
            <person name="Kaminski F."/>
            <person name="Khachane A.N."/>
            <person name="Lang S."/>
            <person name="Linke B."/>
            <person name="McHardy A.C."/>
            <person name="Meyer F."/>
            <person name="Nechitaylo T."/>
            <person name="Puehler A."/>
            <person name="Regenhardt D."/>
            <person name="Rupp O."/>
            <person name="Sabirova J.S."/>
            <person name="Selbitschka W."/>
            <person name="Yakimov M.M."/>
            <person name="Timmis K.N."/>
            <person name="Vorhoelter F.-J."/>
            <person name="Weidner S."/>
            <person name="Kaiser O."/>
            <person name="Golyshin P.N."/>
        </authorList>
    </citation>
    <scope>NUCLEOTIDE SEQUENCE [LARGE SCALE GENOMIC DNA]</scope>
    <source>
        <strain>ATCC 700651 / DSM 11573 / NCIMB 13689 / SK2</strain>
    </source>
</reference>
<evidence type="ECO:0000255" key="1">
    <source>
        <dbReference type="HAMAP-Rule" id="MF_00505"/>
    </source>
</evidence>